<proteinExistence type="evidence at protein level"/>
<dbReference type="EMBL" id="AY395756">
    <property type="protein sequence ID" value="AAR14313.1"/>
    <property type="molecule type" value="mRNA"/>
</dbReference>
<dbReference type="EMBL" id="BX248261">
    <property type="protein sequence ID" value="CAD62589.1"/>
    <property type="status" value="ALT_INIT"/>
    <property type="molecule type" value="mRNA"/>
</dbReference>
<dbReference type="EMBL" id="AK057816">
    <property type="protein sequence ID" value="BAB71589.1"/>
    <property type="molecule type" value="mRNA"/>
</dbReference>
<dbReference type="EMBL" id="AK290519">
    <property type="protein sequence ID" value="BAF83208.1"/>
    <property type="molecule type" value="mRNA"/>
</dbReference>
<dbReference type="EMBL" id="CH471061">
    <property type="protein sequence ID" value="EAW81844.1"/>
    <property type="molecule type" value="Genomic_DNA"/>
</dbReference>
<dbReference type="EMBL" id="BC001130">
    <property type="protein sequence ID" value="AAH01130.1"/>
    <property type="molecule type" value="mRNA"/>
</dbReference>
<dbReference type="EMBL" id="BC005999">
    <property type="protein sequence ID" value="AAH05999.1"/>
    <property type="molecule type" value="mRNA"/>
</dbReference>
<dbReference type="CCDS" id="CCDS55948.1">
    <molecule id="Q9BQ24-2"/>
</dbReference>
<dbReference type="CCDS" id="CCDS9985.1">
    <molecule id="Q9BQ24-1"/>
</dbReference>
<dbReference type="RefSeq" id="NP_001185882.1">
    <molecule id="Q9BQ24-2"/>
    <property type="nucleotide sequence ID" value="NM_001198953.2"/>
</dbReference>
<dbReference type="RefSeq" id="NP_076976.1">
    <molecule id="Q9BQ24-1"/>
    <property type="nucleotide sequence ID" value="NM_024071.4"/>
</dbReference>
<dbReference type="PDB" id="2RRF">
    <property type="method" value="NMR"/>
    <property type="chains" value="A=107-234"/>
</dbReference>
<dbReference type="PDBsum" id="2RRF"/>
<dbReference type="BMRB" id="Q9BQ24"/>
<dbReference type="SMR" id="Q9BQ24"/>
<dbReference type="BioGRID" id="122502">
    <property type="interactions" value="89"/>
</dbReference>
<dbReference type="FunCoup" id="Q9BQ24">
    <property type="interactions" value="256"/>
</dbReference>
<dbReference type="IntAct" id="Q9BQ24">
    <property type="interactions" value="35"/>
</dbReference>
<dbReference type="STRING" id="9606.ENSP00000216602"/>
<dbReference type="GlyGen" id="Q9BQ24">
    <property type="glycosylation" value="1 site, 1 O-linked glycan (1 site)"/>
</dbReference>
<dbReference type="iPTMnet" id="Q9BQ24"/>
<dbReference type="PhosphoSitePlus" id="Q9BQ24"/>
<dbReference type="BioMuta" id="ZFYVE21"/>
<dbReference type="DMDM" id="66774028"/>
<dbReference type="jPOST" id="Q9BQ24"/>
<dbReference type="MassIVE" id="Q9BQ24"/>
<dbReference type="PaxDb" id="9606-ENSP00000216602"/>
<dbReference type="PeptideAtlas" id="Q9BQ24"/>
<dbReference type="ProteomicsDB" id="78615">
    <molecule id="Q9BQ24-1"/>
</dbReference>
<dbReference type="ProteomicsDB" id="78616">
    <molecule id="Q9BQ24-2"/>
</dbReference>
<dbReference type="Pumba" id="Q9BQ24"/>
<dbReference type="Antibodypedia" id="28114">
    <property type="antibodies" value="105 antibodies from 22 providers"/>
</dbReference>
<dbReference type="DNASU" id="79038"/>
<dbReference type="Ensembl" id="ENST00000216602.10">
    <molecule id="Q9BQ24-2"/>
    <property type="protein sequence ID" value="ENSP00000216602.6"/>
    <property type="gene ID" value="ENSG00000100711.14"/>
</dbReference>
<dbReference type="Ensembl" id="ENST00000311141.7">
    <molecule id="Q9BQ24-1"/>
    <property type="protein sequence ID" value="ENSP00000310543.2"/>
    <property type="gene ID" value="ENSG00000100711.14"/>
</dbReference>
<dbReference type="GeneID" id="79038"/>
<dbReference type="KEGG" id="hsa:79038"/>
<dbReference type="MANE-Select" id="ENST00000311141.7">
    <property type="protein sequence ID" value="ENSP00000310543.2"/>
    <property type="RefSeq nucleotide sequence ID" value="NM_024071.4"/>
    <property type="RefSeq protein sequence ID" value="NP_076976.1"/>
</dbReference>
<dbReference type="UCSC" id="uc001yoc.4">
    <molecule id="Q9BQ24-1"/>
    <property type="organism name" value="human"/>
</dbReference>
<dbReference type="AGR" id="HGNC:20760"/>
<dbReference type="CTD" id="79038"/>
<dbReference type="DisGeNET" id="79038"/>
<dbReference type="GeneCards" id="ZFYVE21"/>
<dbReference type="HGNC" id="HGNC:20760">
    <property type="gene designation" value="ZFYVE21"/>
</dbReference>
<dbReference type="HPA" id="ENSG00000100711">
    <property type="expression patterns" value="Low tissue specificity"/>
</dbReference>
<dbReference type="MIM" id="613504">
    <property type="type" value="gene"/>
</dbReference>
<dbReference type="neXtProt" id="NX_Q9BQ24"/>
<dbReference type="OpenTargets" id="ENSG00000100711"/>
<dbReference type="PharmGKB" id="PA134879875"/>
<dbReference type="VEuPathDB" id="HostDB:ENSG00000100711"/>
<dbReference type="eggNOG" id="ENOG502QRR6">
    <property type="taxonomic scope" value="Eukaryota"/>
</dbReference>
<dbReference type="GeneTree" id="ENSGT00940000159639"/>
<dbReference type="HOGENOM" id="CLU_103398_0_0_1"/>
<dbReference type="InParanoid" id="Q9BQ24"/>
<dbReference type="OMA" id="HCEIEIA"/>
<dbReference type="OrthoDB" id="660555at2759"/>
<dbReference type="PAN-GO" id="Q9BQ24">
    <property type="GO annotations" value="0 GO annotations based on evolutionary models"/>
</dbReference>
<dbReference type="PhylomeDB" id="Q9BQ24"/>
<dbReference type="TreeFam" id="TF329481"/>
<dbReference type="PathwayCommons" id="Q9BQ24"/>
<dbReference type="SignaLink" id="Q9BQ24"/>
<dbReference type="BioGRID-ORCS" id="79038">
    <property type="hits" value="12 hits in 1159 CRISPR screens"/>
</dbReference>
<dbReference type="ChiTaRS" id="ZFYVE21">
    <property type="organism name" value="human"/>
</dbReference>
<dbReference type="EvolutionaryTrace" id="Q9BQ24"/>
<dbReference type="GenomeRNAi" id="79038"/>
<dbReference type="Pharos" id="Q9BQ24">
    <property type="development level" value="Tbio"/>
</dbReference>
<dbReference type="PRO" id="PR:Q9BQ24"/>
<dbReference type="Proteomes" id="UP000005640">
    <property type="component" value="Chromosome 14"/>
</dbReference>
<dbReference type="RNAct" id="Q9BQ24">
    <property type="molecule type" value="protein"/>
</dbReference>
<dbReference type="Bgee" id="ENSG00000100711">
    <property type="expression patterns" value="Expressed in secondary oocyte and 192 other cell types or tissues"/>
</dbReference>
<dbReference type="ExpressionAtlas" id="Q9BQ24">
    <property type="expression patterns" value="baseline and differential"/>
</dbReference>
<dbReference type="GO" id="GO:0005768">
    <property type="term" value="C:endosome"/>
    <property type="evidence" value="ECO:0007669"/>
    <property type="project" value="UniProtKB-SubCell"/>
</dbReference>
<dbReference type="GO" id="GO:0005925">
    <property type="term" value="C:focal adhesion"/>
    <property type="evidence" value="ECO:0007669"/>
    <property type="project" value="UniProtKB-SubCell"/>
</dbReference>
<dbReference type="GO" id="GO:0008270">
    <property type="term" value="F:zinc ion binding"/>
    <property type="evidence" value="ECO:0007669"/>
    <property type="project" value="UniProtKB-KW"/>
</dbReference>
<dbReference type="CDD" id="cd15727">
    <property type="entry name" value="FYVE_ZF21"/>
    <property type="match status" value="1"/>
</dbReference>
<dbReference type="Gene3D" id="2.30.29.160">
    <property type="entry name" value="Zinc finger FYVE domain-containing protein 21, C-terminal"/>
    <property type="match status" value="1"/>
</dbReference>
<dbReference type="Gene3D" id="3.30.40.10">
    <property type="entry name" value="Zinc/RING finger domain, C3HC4 (zinc finger)"/>
    <property type="match status" value="1"/>
</dbReference>
<dbReference type="InterPro" id="IPR052113">
    <property type="entry name" value="FYVE-type_Zinc_Finger"/>
</dbReference>
<dbReference type="InterPro" id="IPR032031">
    <property type="entry name" value="ZFYVE21_C"/>
</dbReference>
<dbReference type="InterPro" id="IPR038632">
    <property type="entry name" value="ZFYVE21_C_sf"/>
</dbReference>
<dbReference type="InterPro" id="IPR000306">
    <property type="entry name" value="Znf_FYVE"/>
</dbReference>
<dbReference type="InterPro" id="IPR017455">
    <property type="entry name" value="Znf_FYVE-rel"/>
</dbReference>
<dbReference type="InterPro" id="IPR011011">
    <property type="entry name" value="Znf_FYVE_PHD"/>
</dbReference>
<dbReference type="InterPro" id="IPR013083">
    <property type="entry name" value="Znf_RING/FYVE/PHD"/>
</dbReference>
<dbReference type="PANTHER" id="PTHR39490">
    <property type="entry name" value="ARRESTIN DOMAIN-CONTAINING PROTEIN D"/>
    <property type="match status" value="1"/>
</dbReference>
<dbReference type="PANTHER" id="PTHR39490:SF8">
    <property type="entry name" value="ZINC FINGER FYVE DOMAIN-CONTAINING PROTEIN 21"/>
    <property type="match status" value="1"/>
</dbReference>
<dbReference type="Pfam" id="PF01363">
    <property type="entry name" value="FYVE"/>
    <property type="match status" value="1"/>
</dbReference>
<dbReference type="Pfam" id="PF16696">
    <property type="entry name" value="ZFYVE21_C"/>
    <property type="match status" value="1"/>
</dbReference>
<dbReference type="SMART" id="SM00064">
    <property type="entry name" value="FYVE"/>
    <property type="match status" value="1"/>
</dbReference>
<dbReference type="SUPFAM" id="SSF57903">
    <property type="entry name" value="FYVE/PHD zinc finger"/>
    <property type="match status" value="1"/>
</dbReference>
<dbReference type="PROSITE" id="PS50178">
    <property type="entry name" value="ZF_FYVE"/>
    <property type="match status" value="1"/>
</dbReference>
<protein>
    <recommendedName>
        <fullName>Zinc finger FYVE domain-containing protein 21</fullName>
        <shortName>ZF21</shortName>
    </recommendedName>
</protein>
<keyword id="KW-0002">3D-structure</keyword>
<keyword id="KW-0025">Alternative splicing</keyword>
<keyword id="KW-0965">Cell junction</keyword>
<keyword id="KW-0968">Cytoplasmic vesicle</keyword>
<keyword id="KW-0967">Endosome</keyword>
<keyword id="KW-0479">Metal-binding</keyword>
<keyword id="KW-1267">Proteomics identification</keyword>
<keyword id="KW-1185">Reference proteome</keyword>
<keyword id="KW-0862">Zinc</keyword>
<keyword id="KW-0863">Zinc-finger</keyword>
<gene>
    <name type="primary">ZFYVE21</name>
</gene>
<sequence length="234" mass="26506">MSSEVSARRDAKKLVRSPSGLRMVPEHRAFGSPFGLEEPQWVPDKECRRCMQCDAKFDFLTRKHHCRRCGKCFCDRCCSQKVPLRRMCFVDPVRQCAECALVSLKEAEFYDKQLKVLLSGATFLVTFGNSEKPETMTCRLSNNQRYLFLDGDSHYEIEIVHISTVQILTEGFPPGGGNARATGMFLQYTVPGTEGVTQLKLTVVEDVTVGRRQAVAWLVAMHKAAKLLYESRDQ</sequence>
<organism>
    <name type="scientific">Homo sapiens</name>
    <name type="common">Human</name>
    <dbReference type="NCBI Taxonomy" id="9606"/>
    <lineage>
        <taxon>Eukaryota</taxon>
        <taxon>Metazoa</taxon>
        <taxon>Chordata</taxon>
        <taxon>Craniata</taxon>
        <taxon>Vertebrata</taxon>
        <taxon>Euteleostomi</taxon>
        <taxon>Mammalia</taxon>
        <taxon>Eutheria</taxon>
        <taxon>Euarchontoglires</taxon>
        <taxon>Primates</taxon>
        <taxon>Haplorrhini</taxon>
        <taxon>Catarrhini</taxon>
        <taxon>Hominidae</taxon>
        <taxon>Homo</taxon>
    </lineage>
</organism>
<name>ZFY21_HUMAN</name>
<feature type="chain" id="PRO_0000098720" description="Zinc finger FYVE domain-containing protein 21">
    <location>
        <begin position="1"/>
        <end position="234"/>
    </location>
</feature>
<feature type="zinc finger region" description="FYVE-type" evidence="1">
    <location>
        <begin position="44"/>
        <end position="104"/>
    </location>
</feature>
<feature type="region of interest" description="PH-like">
    <location>
        <begin position="107"/>
        <end position="234"/>
    </location>
</feature>
<feature type="binding site" evidence="1">
    <location>
        <position position="50"/>
    </location>
    <ligand>
        <name>Zn(2+)</name>
        <dbReference type="ChEBI" id="CHEBI:29105"/>
        <label>1</label>
    </ligand>
</feature>
<feature type="binding site" evidence="1">
    <location>
        <position position="53"/>
    </location>
    <ligand>
        <name>Zn(2+)</name>
        <dbReference type="ChEBI" id="CHEBI:29105"/>
        <label>1</label>
    </ligand>
</feature>
<feature type="binding site" evidence="1">
    <location>
        <position position="66"/>
    </location>
    <ligand>
        <name>Zn(2+)</name>
        <dbReference type="ChEBI" id="CHEBI:29105"/>
        <label>2</label>
    </ligand>
</feature>
<feature type="binding site" evidence="1">
    <location>
        <position position="69"/>
    </location>
    <ligand>
        <name>Zn(2+)</name>
        <dbReference type="ChEBI" id="CHEBI:29105"/>
        <label>2</label>
    </ligand>
</feature>
<feature type="binding site" evidence="1">
    <location>
        <position position="74"/>
    </location>
    <ligand>
        <name>Zn(2+)</name>
        <dbReference type="ChEBI" id="CHEBI:29105"/>
        <label>1</label>
    </ligand>
</feature>
<feature type="binding site" evidence="1">
    <location>
        <position position="77"/>
    </location>
    <ligand>
        <name>Zn(2+)</name>
        <dbReference type="ChEBI" id="CHEBI:29105"/>
        <label>1</label>
    </ligand>
</feature>
<feature type="binding site" evidence="1">
    <location>
        <position position="96"/>
    </location>
    <ligand>
        <name>Zn(2+)</name>
        <dbReference type="ChEBI" id="CHEBI:29105"/>
        <label>2</label>
    </ligand>
</feature>
<feature type="binding site" evidence="1">
    <location>
        <position position="99"/>
    </location>
    <ligand>
        <name>Zn(2+)</name>
        <dbReference type="ChEBI" id="CHEBI:29105"/>
        <label>2</label>
    </ligand>
</feature>
<feature type="splice variant" id="VSP_013794" description="In isoform 2." evidence="4">
    <original>G</original>
    <variation>GEKDIHAYTSLRGSQPASE</variation>
    <location>
        <position position="175"/>
    </location>
</feature>
<feature type="mutagenesis site" description="Diffuse cytoplasmic localization." evidence="2">
    <original>HH</original>
    <variation>NN</variation>
    <location>
        <begin position="64"/>
        <end position="65"/>
    </location>
</feature>
<feature type="helix" evidence="6">
    <location>
        <begin position="108"/>
        <end position="119"/>
    </location>
</feature>
<feature type="strand" evidence="6">
    <location>
        <begin position="121"/>
        <end position="125"/>
    </location>
</feature>
<feature type="strand" evidence="6">
    <location>
        <begin position="134"/>
        <end position="140"/>
    </location>
</feature>
<feature type="strand" evidence="6">
    <location>
        <begin position="144"/>
        <end position="158"/>
    </location>
</feature>
<feature type="turn" evidence="6">
    <location>
        <begin position="159"/>
        <end position="161"/>
    </location>
</feature>
<feature type="strand" evidence="6">
    <location>
        <begin position="174"/>
        <end position="178"/>
    </location>
</feature>
<feature type="strand" evidence="6">
    <location>
        <begin position="185"/>
        <end position="188"/>
    </location>
</feature>
<feature type="strand" evidence="6">
    <location>
        <begin position="193"/>
        <end position="195"/>
    </location>
</feature>
<feature type="strand" evidence="6">
    <location>
        <begin position="197"/>
        <end position="202"/>
    </location>
</feature>
<feature type="strand" evidence="6">
    <location>
        <begin position="206"/>
        <end position="208"/>
    </location>
</feature>
<feature type="helix" evidence="6">
    <location>
        <begin position="211"/>
        <end position="230"/>
    </location>
</feature>
<comment type="function">
    <text evidence="2 3">Plays a role in cell adhesion, and thereby in cell motility which requires repeated formation and disassembly of focal adhesions. Regulates microtubule-induced PTK2/FAK1 dephosphorylation, an event important for focal adhesion disassembly, as well as integrin beta-1/ITGB1 cell surface expression.</text>
</comment>
<comment type="subunit">
    <text evidence="2 3">Interacts with PTK2/FAK1.</text>
</comment>
<comment type="interaction">
    <interactant intactId="EBI-2849569">
        <id>Q9BQ24</id>
    </interactant>
    <interactant intactId="EBI-741181">
        <id>Q6RW13</id>
        <label>AGTRAP</label>
    </interactant>
    <organismsDiffer>false</organismsDiffer>
    <experiments>3</experiments>
</comment>
<comment type="interaction">
    <interactant intactId="EBI-2849569">
        <id>Q9BQ24</id>
    </interactant>
    <interactant intactId="EBI-714543">
        <id>Q15041</id>
        <label>ARL6IP1</label>
    </interactant>
    <organismsDiffer>false</organismsDiffer>
    <experiments>6</experiments>
</comment>
<comment type="interaction">
    <interactant intactId="EBI-2849569">
        <id>Q9BQ24</id>
    </interactant>
    <interactant intactId="EBI-17278014">
        <id>Q8IZR5-2</id>
        <label>CMTM4</label>
    </interactant>
    <organismsDiffer>false</organismsDiffer>
    <experiments>3</experiments>
</comment>
<comment type="interaction">
    <interactant intactId="EBI-2849569">
        <id>Q9BQ24</id>
    </interactant>
    <interactant intactId="EBI-8561769">
        <id>Q5SUL5</id>
        <label>HLA-A</label>
    </interactant>
    <organismsDiffer>false</organismsDiffer>
    <experiments>3</experiments>
</comment>
<comment type="interaction">
    <interactant intactId="EBI-2849569">
        <id>Q9BQ24</id>
    </interactant>
    <interactant intactId="EBI-399080">
        <id>Q92993</id>
        <label>KAT5</label>
    </interactant>
    <organismsDiffer>false</organismsDiffer>
    <experiments>3</experiments>
</comment>
<comment type="interaction">
    <interactant intactId="EBI-2849569">
        <id>Q9BQ24</id>
    </interactant>
    <interactant intactId="EBI-948001">
        <id>Q15323</id>
        <label>KRT31</label>
    </interactant>
    <organismsDiffer>false</organismsDiffer>
    <experiments>3</experiments>
</comment>
<comment type="interaction">
    <interactant intactId="EBI-2849569">
        <id>Q9BQ24</id>
    </interactant>
    <interactant intactId="EBI-1047263">
        <id>O76015</id>
        <label>KRT38</label>
    </interactant>
    <organismsDiffer>false</organismsDiffer>
    <experiments>3</experiments>
</comment>
<comment type="interaction">
    <interactant intactId="EBI-2849569">
        <id>Q9BQ24</id>
    </interactant>
    <interactant intactId="EBI-10171697">
        <id>Q6A162</id>
        <label>KRT40</label>
    </interactant>
    <organismsDiffer>false</organismsDiffer>
    <experiments>3</experiments>
</comment>
<comment type="interaction">
    <interactant intactId="EBI-2849569">
        <id>Q9BQ24</id>
    </interactant>
    <interactant intactId="EBI-10172150">
        <id>P60370</id>
        <label>KRTAP10-5</label>
    </interactant>
    <organismsDiffer>false</organismsDiffer>
    <experiments>3</experiments>
</comment>
<comment type="interaction">
    <interactant intactId="EBI-2849569">
        <id>Q9BQ24</id>
    </interactant>
    <interactant intactId="EBI-10171774">
        <id>P60410</id>
        <label>KRTAP10-8</label>
    </interactant>
    <organismsDiffer>false</organismsDiffer>
    <experiments>3</experiments>
</comment>
<comment type="interaction">
    <interactant intactId="EBI-2849569">
        <id>Q9BQ24</id>
    </interactant>
    <interactant intactId="EBI-3958099">
        <id>P26371</id>
        <label>KRTAP5-9</label>
    </interactant>
    <organismsDiffer>false</organismsDiffer>
    <experiments>3</experiments>
</comment>
<comment type="interaction">
    <interactant intactId="EBI-2849569">
        <id>Q9BQ24</id>
    </interactant>
    <interactant intactId="EBI-11742507">
        <id>Q8TAP4-4</id>
        <label>LMO3</label>
    </interactant>
    <organismsDiffer>false</organismsDiffer>
    <experiments>3</experiments>
</comment>
<comment type="interaction">
    <interactant intactId="EBI-2849569">
        <id>Q9BQ24</id>
    </interactant>
    <interactant intactId="EBI-10172526">
        <id>Q9UJV3-2</id>
        <label>MID2</label>
    </interactant>
    <organismsDiffer>false</organismsDiffer>
    <experiments>3</experiments>
</comment>
<comment type="interaction">
    <interactant intactId="EBI-2849569">
        <id>Q9BQ24</id>
    </interactant>
    <interactant intactId="EBI-742948">
        <id>Q5JR59</id>
        <label>MTUS2</label>
    </interactant>
    <organismsDiffer>false</organismsDiffer>
    <experiments>3</experiments>
</comment>
<comment type="interaction">
    <interactant intactId="EBI-2849569">
        <id>Q9BQ24</id>
    </interactant>
    <interactant intactId="EBI-945833">
        <id>Q7Z3S9</id>
        <label>NOTCH2NLA</label>
    </interactant>
    <organismsDiffer>false</organismsDiffer>
    <experiments>3</experiments>
</comment>
<comment type="interaction">
    <interactant intactId="EBI-2849569">
        <id>Q9BQ24</id>
    </interactant>
    <interactant intactId="EBI-1105124">
        <id>Q5VU43</id>
        <label>PDE4DIP</label>
    </interactant>
    <organismsDiffer>false</organismsDiffer>
    <experiments>3</experiments>
</comment>
<comment type="interaction">
    <interactant intactId="EBI-2849569">
        <id>Q9BQ24</id>
    </interactant>
    <interactant intactId="EBI-1383528">
        <id>P17252</id>
        <label>PRKCA</label>
    </interactant>
    <organismsDiffer>false</organismsDiffer>
    <experiments>3</experiments>
</comment>
<comment type="interaction">
    <interactant intactId="EBI-2849569">
        <id>Q9BQ24</id>
    </interactant>
    <interactant intactId="EBI-712367">
        <id>Q9UI14</id>
        <label>RABAC1</label>
    </interactant>
    <organismsDiffer>false</organismsDiffer>
    <experiments>6</experiments>
</comment>
<comment type="interaction">
    <interactant intactId="EBI-2849569">
        <id>Q9BQ24</id>
    </interactant>
    <interactant intactId="EBI-750345">
        <id>Q96HR9</id>
        <label>REEP6</label>
    </interactant>
    <organismsDiffer>false</organismsDiffer>
    <experiments>3</experiments>
</comment>
<comment type="interaction">
    <interactant intactId="EBI-2849569">
        <id>Q9BQ24</id>
    </interactant>
    <interactant intactId="EBI-14065960">
        <id>Q96HR9-2</id>
        <label>REEP6</label>
    </interactant>
    <organismsDiffer>false</organismsDiffer>
    <experiments>3</experiments>
</comment>
<comment type="interaction">
    <interactant intactId="EBI-2849569">
        <id>Q9BQ24</id>
    </interactant>
    <interactant intactId="EBI-715945">
        <id>Q9NQC3</id>
        <label>RTN4</label>
    </interactant>
    <organismsDiffer>false</organismsDiffer>
    <experiments>3</experiments>
</comment>
<comment type="interaction">
    <interactant intactId="EBI-2849569">
        <id>Q9BQ24</id>
    </interactant>
    <interactant intactId="EBI-10296096">
        <id>Q9NQC3-2</id>
        <label>RTN4</label>
    </interactant>
    <organismsDiffer>false</organismsDiffer>
    <experiments>3</experiments>
</comment>
<comment type="interaction">
    <interactant intactId="EBI-2849569">
        <id>Q9BQ24</id>
    </interactant>
    <interactant intactId="EBI-9090795">
        <id>Q15047-2</id>
        <label>SETDB1</label>
    </interactant>
    <organismsDiffer>false</organismsDiffer>
    <experiments>3</experiments>
</comment>
<comment type="interaction">
    <interactant intactId="EBI-2849569">
        <id>Q9BQ24</id>
    </interactant>
    <interactant intactId="EBI-747107">
        <id>Q8IUQ4</id>
        <label>SIAH1</label>
    </interactant>
    <organismsDiffer>false</organismsDiffer>
    <experiments>3</experiments>
</comment>
<comment type="interaction">
    <interactant intactId="EBI-2849569">
        <id>Q9BQ24</id>
    </interactant>
    <interactant intactId="EBI-12334905">
        <id>Q71RC9</id>
        <label>SMIM5</label>
    </interactant>
    <organismsDiffer>false</organismsDiffer>
    <experiments>3</experiments>
</comment>
<comment type="interaction">
    <interactant intactId="EBI-2849569">
        <id>Q9BQ24</id>
    </interactant>
    <interactant intactId="EBI-359224">
        <id>Q13077</id>
        <label>TRAF1</label>
    </interactant>
    <organismsDiffer>false</organismsDiffer>
    <experiments>3</experiments>
</comment>
<comment type="interaction">
    <interactant intactId="EBI-2849569">
        <id>Q9BQ24</id>
    </interactant>
    <interactant intactId="EBI-719493">
        <id>P14373</id>
        <label>TRIM27</label>
    </interactant>
    <organismsDiffer>false</organismsDiffer>
    <experiments>3</experiments>
</comment>
<comment type="interaction">
    <interactant intactId="EBI-2849569">
        <id>Q9BQ24</id>
    </interactant>
    <interactant intactId="EBI-2799703">
        <id>O95070</id>
        <label>YIF1A</label>
    </interactant>
    <organismsDiffer>false</organismsDiffer>
    <experiments>3</experiments>
</comment>
<comment type="interaction">
    <interactant intactId="EBI-2849569">
        <id>Q9BQ24</id>
    </interactant>
    <interactant intactId="EBI-359832">
        <id>P61981</id>
        <label>YWHAG</label>
    </interactant>
    <organismsDiffer>false</organismsDiffer>
    <experiments>3</experiments>
</comment>
<comment type="subcellular location">
    <subcellularLocation>
        <location>Cell junction</location>
        <location>Focal adhesion</location>
    </subcellularLocation>
    <subcellularLocation>
        <location>Cytoplasmic vesicle</location>
    </subcellularLocation>
    <subcellularLocation>
        <location>Endosome</location>
    </subcellularLocation>
    <text>Within cytoplasmic vesicles, partially colocalizes with EEA1, an endosomal marker.</text>
</comment>
<comment type="alternative products">
    <event type="alternative splicing"/>
    <isoform>
        <id>Q9BQ24-1</id>
        <name>1</name>
        <sequence type="displayed"/>
    </isoform>
    <isoform>
        <id>Q9BQ24-2</id>
        <name>2</name>
        <sequence type="described" ref="VSP_013794"/>
    </isoform>
</comment>
<comment type="domain">
    <text>The FYVE-type zinc finger mediates interaction with PTK2/FAK1, and also interaction with PI(3)P and association with endosomes.</text>
</comment>
<comment type="domain">
    <text>The C-terminal region exhibits a structure similar to canonical PH domains, but lacks a positively charged interface to bind phosphatidylinositol phosphate.</text>
</comment>
<comment type="sequence caution" evidence="5">
    <conflict type="erroneous initiation">
        <sequence resource="EMBL-CDS" id="CAD62589"/>
    </conflict>
</comment>
<accession>Q9BQ24</accession>
<accession>A8K3A4</accession>
<accession>Q86T05</accession>
<accession>Q96LT1</accession>
<evidence type="ECO:0000255" key="1">
    <source>
        <dbReference type="PROSITE-ProRule" id="PRU00091"/>
    </source>
</evidence>
<evidence type="ECO:0000269" key="2">
    <source>
    </source>
</evidence>
<evidence type="ECO:0000269" key="3">
    <source>
    </source>
</evidence>
<evidence type="ECO:0000303" key="4">
    <source>
    </source>
</evidence>
<evidence type="ECO:0000305" key="5"/>
<evidence type="ECO:0007829" key="6">
    <source>
        <dbReference type="PDB" id="2RRF"/>
    </source>
</evidence>
<reference key="1">
    <citation type="submission" date="2003-09" db="EMBL/GenBank/DDBJ databases">
        <title>Cloning of a FYVE containing protein.</title>
        <authorList>
            <person name="Zheng H."/>
            <person name="Xie Y."/>
            <person name="Mao Y."/>
        </authorList>
    </citation>
    <scope>NUCLEOTIDE SEQUENCE [MRNA] (ISOFORM 1)</scope>
</reference>
<reference key="2">
    <citation type="submission" date="2003-02" db="EMBL/GenBank/DDBJ databases">
        <title>Full-length cDNA libraries and normalization.</title>
        <authorList>
            <person name="Li W.B."/>
            <person name="Gruber C."/>
            <person name="Jessee J."/>
            <person name="Polayes D."/>
        </authorList>
    </citation>
    <scope>NUCLEOTIDE SEQUENCE [LARGE SCALE MRNA] (ISOFORM 1)</scope>
    <source>
        <tissue>Brain</tissue>
    </source>
</reference>
<reference key="3">
    <citation type="journal article" date="2004" name="Nat. Genet.">
        <title>Complete sequencing and characterization of 21,243 full-length human cDNAs.</title>
        <authorList>
            <person name="Ota T."/>
            <person name="Suzuki Y."/>
            <person name="Nishikawa T."/>
            <person name="Otsuki T."/>
            <person name="Sugiyama T."/>
            <person name="Irie R."/>
            <person name="Wakamatsu A."/>
            <person name="Hayashi K."/>
            <person name="Sato H."/>
            <person name="Nagai K."/>
            <person name="Kimura K."/>
            <person name="Makita H."/>
            <person name="Sekine M."/>
            <person name="Obayashi M."/>
            <person name="Nishi T."/>
            <person name="Shibahara T."/>
            <person name="Tanaka T."/>
            <person name="Ishii S."/>
            <person name="Yamamoto J."/>
            <person name="Saito K."/>
            <person name="Kawai Y."/>
            <person name="Isono Y."/>
            <person name="Nakamura Y."/>
            <person name="Nagahari K."/>
            <person name="Murakami K."/>
            <person name="Yasuda T."/>
            <person name="Iwayanagi T."/>
            <person name="Wagatsuma M."/>
            <person name="Shiratori A."/>
            <person name="Sudo H."/>
            <person name="Hosoiri T."/>
            <person name="Kaku Y."/>
            <person name="Kodaira H."/>
            <person name="Kondo H."/>
            <person name="Sugawara M."/>
            <person name="Takahashi M."/>
            <person name="Kanda K."/>
            <person name="Yokoi T."/>
            <person name="Furuya T."/>
            <person name="Kikkawa E."/>
            <person name="Omura Y."/>
            <person name="Abe K."/>
            <person name="Kamihara K."/>
            <person name="Katsuta N."/>
            <person name="Sato K."/>
            <person name="Tanikawa M."/>
            <person name="Yamazaki M."/>
            <person name="Ninomiya K."/>
            <person name="Ishibashi T."/>
            <person name="Yamashita H."/>
            <person name="Murakawa K."/>
            <person name="Fujimori K."/>
            <person name="Tanai H."/>
            <person name="Kimata M."/>
            <person name="Watanabe M."/>
            <person name="Hiraoka S."/>
            <person name="Chiba Y."/>
            <person name="Ishida S."/>
            <person name="Ono Y."/>
            <person name="Takiguchi S."/>
            <person name="Watanabe S."/>
            <person name="Yosida M."/>
            <person name="Hotuta T."/>
            <person name="Kusano J."/>
            <person name="Kanehori K."/>
            <person name="Takahashi-Fujii A."/>
            <person name="Hara H."/>
            <person name="Tanase T.-O."/>
            <person name="Nomura Y."/>
            <person name="Togiya S."/>
            <person name="Komai F."/>
            <person name="Hara R."/>
            <person name="Takeuchi K."/>
            <person name="Arita M."/>
            <person name="Imose N."/>
            <person name="Musashino K."/>
            <person name="Yuuki H."/>
            <person name="Oshima A."/>
            <person name="Sasaki N."/>
            <person name="Aotsuka S."/>
            <person name="Yoshikawa Y."/>
            <person name="Matsunawa H."/>
            <person name="Ichihara T."/>
            <person name="Shiohata N."/>
            <person name="Sano S."/>
            <person name="Moriya S."/>
            <person name="Momiyama H."/>
            <person name="Satoh N."/>
            <person name="Takami S."/>
            <person name="Terashima Y."/>
            <person name="Suzuki O."/>
            <person name="Nakagawa S."/>
            <person name="Senoh A."/>
            <person name="Mizoguchi H."/>
            <person name="Goto Y."/>
            <person name="Shimizu F."/>
            <person name="Wakebe H."/>
            <person name="Hishigaki H."/>
            <person name="Watanabe T."/>
            <person name="Sugiyama A."/>
            <person name="Takemoto M."/>
            <person name="Kawakami B."/>
            <person name="Yamazaki M."/>
            <person name="Watanabe K."/>
            <person name="Kumagai A."/>
            <person name="Itakura S."/>
            <person name="Fukuzumi Y."/>
            <person name="Fujimori Y."/>
            <person name="Komiyama M."/>
            <person name="Tashiro H."/>
            <person name="Tanigami A."/>
            <person name="Fujiwara T."/>
            <person name="Ono T."/>
            <person name="Yamada K."/>
            <person name="Fujii Y."/>
            <person name="Ozaki K."/>
            <person name="Hirao M."/>
            <person name="Ohmori Y."/>
            <person name="Kawabata A."/>
            <person name="Hikiji T."/>
            <person name="Kobatake N."/>
            <person name="Inagaki H."/>
            <person name="Ikema Y."/>
            <person name="Okamoto S."/>
            <person name="Okitani R."/>
            <person name="Kawakami T."/>
            <person name="Noguchi S."/>
            <person name="Itoh T."/>
            <person name="Shigeta K."/>
            <person name="Senba T."/>
            <person name="Matsumura K."/>
            <person name="Nakajima Y."/>
            <person name="Mizuno T."/>
            <person name="Morinaga M."/>
            <person name="Sasaki M."/>
            <person name="Togashi T."/>
            <person name="Oyama M."/>
            <person name="Hata H."/>
            <person name="Watanabe M."/>
            <person name="Komatsu T."/>
            <person name="Mizushima-Sugano J."/>
            <person name="Satoh T."/>
            <person name="Shirai Y."/>
            <person name="Takahashi Y."/>
            <person name="Nakagawa K."/>
            <person name="Okumura K."/>
            <person name="Nagase T."/>
            <person name="Nomura N."/>
            <person name="Kikuchi H."/>
            <person name="Masuho Y."/>
            <person name="Yamashita R."/>
            <person name="Nakai K."/>
            <person name="Yada T."/>
            <person name="Nakamura Y."/>
            <person name="Ohara O."/>
            <person name="Isogai T."/>
            <person name="Sugano S."/>
        </authorList>
    </citation>
    <scope>NUCLEOTIDE SEQUENCE [LARGE SCALE MRNA] (ISOFORMS 1 AND 2)</scope>
    <source>
        <tissue>Brain</tissue>
        <tissue>Cerebellum</tissue>
    </source>
</reference>
<reference key="4">
    <citation type="submission" date="2005-07" db="EMBL/GenBank/DDBJ databases">
        <authorList>
            <person name="Mural R.J."/>
            <person name="Istrail S."/>
            <person name="Sutton G.G."/>
            <person name="Florea L."/>
            <person name="Halpern A.L."/>
            <person name="Mobarry C.M."/>
            <person name="Lippert R."/>
            <person name="Walenz B."/>
            <person name="Shatkay H."/>
            <person name="Dew I."/>
            <person name="Miller J.R."/>
            <person name="Flanigan M.J."/>
            <person name="Edwards N.J."/>
            <person name="Bolanos R."/>
            <person name="Fasulo D."/>
            <person name="Halldorsson B.V."/>
            <person name="Hannenhalli S."/>
            <person name="Turner R."/>
            <person name="Yooseph S."/>
            <person name="Lu F."/>
            <person name="Nusskern D.R."/>
            <person name="Shue B.C."/>
            <person name="Zheng X.H."/>
            <person name="Zhong F."/>
            <person name="Delcher A.L."/>
            <person name="Huson D.H."/>
            <person name="Kravitz S.A."/>
            <person name="Mouchard L."/>
            <person name="Reinert K."/>
            <person name="Remington K.A."/>
            <person name="Clark A.G."/>
            <person name="Waterman M.S."/>
            <person name="Eichler E.E."/>
            <person name="Adams M.D."/>
            <person name="Hunkapiller M.W."/>
            <person name="Myers E.W."/>
            <person name="Venter J.C."/>
        </authorList>
    </citation>
    <scope>NUCLEOTIDE SEQUENCE [LARGE SCALE GENOMIC DNA]</scope>
</reference>
<reference key="5">
    <citation type="journal article" date="2004" name="Genome Res.">
        <title>The status, quality, and expansion of the NIH full-length cDNA project: the Mammalian Gene Collection (MGC).</title>
        <authorList>
            <consortium name="The MGC Project Team"/>
        </authorList>
    </citation>
    <scope>NUCLEOTIDE SEQUENCE [LARGE SCALE MRNA] (ISOFORM 1)</scope>
    <source>
        <tissue>Bone marrow</tissue>
        <tissue>Skin</tissue>
    </source>
</reference>
<reference key="6">
    <citation type="journal article" date="2010" name="J. Biol. Chem.">
        <title>ZF21 protein regulates cell adhesion and motility.</title>
        <authorList>
            <person name="Nagano M."/>
            <person name="Hoshino D."/>
            <person name="Sakamoto T."/>
            <person name="Kawasaki N."/>
            <person name="Koshikawa N."/>
            <person name="Seiki M."/>
        </authorList>
    </citation>
    <scope>FUNCTION</scope>
    <scope>INTERACTION WITH PTK2/FAK1</scope>
    <scope>SUBCELLULAR LOCATION</scope>
    <scope>MUTAGENESIS OF 64-HIS-HIS-65</scope>
</reference>
<reference key="7">
    <citation type="journal article" date="2011" name="J. Biol. Chem.">
        <title>ZF21 protein, a regulator of the disassembly of focal adhesions and cancer metastasis, contains a novel noncanonical pleckstrin homology domain.</title>
        <authorList>
            <person name="Nagano M."/>
            <person name="Hoshino D."/>
            <person name="Koshiba S."/>
            <person name="Shuo T."/>
            <person name="Koshikawa N."/>
            <person name="Tomizawa T."/>
            <person name="Hayashi F."/>
            <person name="Tochio N."/>
            <person name="Harada T."/>
            <person name="Akizawa T."/>
            <person name="Watanabe S."/>
            <person name="Handa N."/>
            <person name="Shirouzu M."/>
            <person name="Kigawa T."/>
            <person name="Yokoyama S."/>
            <person name="Seiki M."/>
        </authorList>
    </citation>
    <scope>STRUCTURE BY NMR OF 107-234</scope>
    <scope>FUNCTION</scope>
    <scope>SUBUNIT</scope>
    <scope>SUBCELLULAR LOCATION</scope>
    <scope>PH-LIKE DOMAIN</scope>
</reference>